<accession>B2Y1Y5</accession>
<accession>B7ZI23</accession>
<comment type="function">
    <text evidence="1">One of the components of the core complex of photosystem II (PSII). It binds chlorophyll and helps catalyze the primary light-induced photochemical processes of PSII. PSII is a light-driven water:plastoquinone oxidoreductase, using light energy to abstract electrons from H(2)O, generating O(2) and a proton gradient subsequently used for ATP formation.</text>
</comment>
<comment type="cofactor">
    <text evidence="1">Binds multiple chlorophylls. PSII binds additional chlorophylls, carotenoids and specific lipids.</text>
</comment>
<comment type="subunit">
    <text evidence="1">PSII is composed of 1 copy each of membrane proteins PsbA, PsbB, PsbC, PsbD, PsbE, PsbF, PsbH, PsbI, PsbJ, PsbK, PsbL, PsbM, PsbT, PsbX, PsbY, PsbZ, Psb30/Ycf12, at least 3 peripheral proteins of the oxygen-evolving complex and a large number of cofactors. It forms dimeric complexes.</text>
</comment>
<comment type="subcellular location">
    <subcellularLocation>
        <location evidence="1">Plastid</location>
        <location evidence="1">Chloroplast thylakoid membrane</location>
        <topology evidence="1">Multi-pass membrane protein</topology>
    </subcellularLocation>
</comment>
<comment type="similarity">
    <text evidence="1">Belongs to the PsbB/PsbC family. PsbB subfamily.</text>
</comment>
<geneLocation type="chloroplast"/>
<proteinExistence type="inferred from homology"/>
<sequence>MGLPWYRVHTVVLNDPGRLIAVHIMHTALVAGWAGSMALYELAVFDPSDSVLDPMWRQGMFILPFMTRLGIKESWGGWSITGEPIANPGLWSYEGVAGAHIVFSGLCFLSATWHWVYWDLEIFSDPRTGKPSLDLPKIFGIHLFLSGVACFGFGAFHVTGLYGPGIWVSDPFGLTGKIQPVSPAWGAEGFDPFVPGGIASHHVAAGLLGIIAGLFHLSVRPPQRLYRGLRMGNIETVLSSSIAAVFFAAFIVAGTMWYGSATTPIELFGPTRYQWDQGYFQQEIDRRVQAGLAENLSLSEAWSRIPEKLAFYDYIGNNPAKGGLFRAGAMDNGDGIAVGWLGHPIFKDKEGNELFVRRMPTFFETFPVVLVDKEGVIKADIPFRRAESKYSVEQVGVTVEFYGGELNGVSFSDPAIVKKYARRAQLGEIFELDRATLKSDGVFRSSPRGWFTFGHATFALLFFFGHIWHGARTLFRDIFAGIDPELDIQVEFGAFQKIGDPTTKRQVV</sequence>
<gene>
    <name evidence="1" type="primary">psbB</name>
</gene>
<reference key="1">
    <citation type="journal article" date="2008" name="BMC Evol. Biol.">
        <title>The complete plastid genome sequence of Welwitschia mirabilis: an unusually compact plastome with accelerated divergence rates.</title>
        <authorList>
            <person name="McCoy S.R."/>
            <person name="Kuehl J.V."/>
            <person name="Boore J.L."/>
            <person name="Raubeson L.A."/>
        </authorList>
    </citation>
    <scope>NUCLEOTIDE SEQUENCE [LARGE SCALE GENOMIC DNA]</scope>
</reference>
<reference key="2">
    <citation type="journal article" date="2009" name="Mol. Phylogenet. Evol.">
        <title>Evolution of reduced and compact chloroplast genomes (cpDNAs) in gnetophytes: Selection toward a lower-cost strategy.</title>
        <authorList>
            <person name="Wu C.-S."/>
            <person name="Lai Y.-T."/>
            <person name="Lin C.-P."/>
            <person name="Wang Y.-N."/>
            <person name="Chaw S.-M."/>
        </authorList>
    </citation>
    <scope>NUCLEOTIDE SEQUENCE [LARGE SCALE GENOMIC DNA]</scope>
</reference>
<dbReference type="EMBL" id="EU342371">
    <property type="protein sequence ID" value="ABY26815.1"/>
    <property type="molecule type" value="Genomic_DNA"/>
</dbReference>
<dbReference type="EMBL" id="AP009568">
    <property type="protein sequence ID" value="BAH11203.1"/>
    <property type="molecule type" value="Genomic_DNA"/>
</dbReference>
<dbReference type="RefSeq" id="YP_001876602.1">
    <property type="nucleotide sequence ID" value="NC_010654.1"/>
</dbReference>
<dbReference type="SMR" id="B2Y1Y5"/>
<dbReference type="GeneID" id="6276237"/>
<dbReference type="GO" id="GO:0009535">
    <property type="term" value="C:chloroplast thylakoid membrane"/>
    <property type="evidence" value="ECO:0007669"/>
    <property type="project" value="UniProtKB-SubCell"/>
</dbReference>
<dbReference type="GO" id="GO:0009523">
    <property type="term" value="C:photosystem II"/>
    <property type="evidence" value="ECO:0007669"/>
    <property type="project" value="UniProtKB-KW"/>
</dbReference>
<dbReference type="GO" id="GO:0016168">
    <property type="term" value="F:chlorophyll binding"/>
    <property type="evidence" value="ECO:0007669"/>
    <property type="project" value="UniProtKB-UniRule"/>
</dbReference>
<dbReference type="GO" id="GO:0045156">
    <property type="term" value="F:electron transporter, transferring electrons within the cyclic electron transport pathway of photosynthesis activity"/>
    <property type="evidence" value="ECO:0007669"/>
    <property type="project" value="InterPro"/>
</dbReference>
<dbReference type="GO" id="GO:0009772">
    <property type="term" value="P:photosynthetic electron transport in photosystem II"/>
    <property type="evidence" value="ECO:0007669"/>
    <property type="project" value="InterPro"/>
</dbReference>
<dbReference type="FunFam" id="3.10.680.10:FF:000001">
    <property type="entry name" value="Photosystem II CP47 reaction center protein"/>
    <property type="match status" value="1"/>
</dbReference>
<dbReference type="Gene3D" id="3.10.680.10">
    <property type="entry name" value="Photosystem II CP47 reaction center protein"/>
    <property type="match status" value="1"/>
</dbReference>
<dbReference type="HAMAP" id="MF_01495">
    <property type="entry name" value="PSII_PsbB_CP47"/>
    <property type="match status" value="1"/>
</dbReference>
<dbReference type="InterPro" id="IPR000932">
    <property type="entry name" value="PS_antenna-like"/>
</dbReference>
<dbReference type="InterPro" id="IPR036001">
    <property type="entry name" value="PS_II_antenna-like_sf"/>
</dbReference>
<dbReference type="InterPro" id="IPR017486">
    <property type="entry name" value="PSII_PsbB"/>
</dbReference>
<dbReference type="NCBIfam" id="TIGR03039">
    <property type="entry name" value="PS_II_CP47"/>
    <property type="match status" value="1"/>
</dbReference>
<dbReference type="PANTHER" id="PTHR33180">
    <property type="entry name" value="PHOTOSYSTEM II CP43 REACTION CENTER PROTEIN"/>
    <property type="match status" value="1"/>
</dbReference>
<dbReference type="PANTHER" id="PTHR33180:SF37">
    <property type="entry name" value="PHOTOSYSTEM II CP43 REACTION CENTER PROTEIN"/>
    <property type="match status" value="1"/>
</dbReference>
<dbReference type="Pfam" id="PF00421">
    <property type="entry name" value="PSII"/>
    <property type="match status" value="1"/>
</dbReference>
<dbReference type="SUPFAM" id="SSF161077">
    <property type="entry name" value="Photosystem II antenna protein-like"/>
    <property type="match status" value="1"/>
</dbReference>
<organism>
    <name type="scientific">Welwitschia mirabilis</name>
    <name type="common">Tree tumbo</name>
    <name type="synonym">Welwitschia bainesii</name>
    <dbReference type="NCBI Taxonomy" id="3377"/>
    <lineage>
        <taxon>Eukaryota</taxon>
        <taxon>Viridiplantae</taxon>
        <taxon>Streptophyta</taxon>
        <taxon>Embryophyta</taxon>
        <taxon>Tracheophyta</taxon>
        <taxon>Spermatophyta</taxon>
        <taxon>Gnetopsida</taxon>
        <taxon>Gnetidae</taxon>
        <taxon>Welwitschiales</taxon>
        <taxon>Welwitschiaceae</taxon>
        <taxon>Welwitschia</taxon>
    </lineage>
</organism>
<keyword id="KW-0148">Chlorophyll</keyword>
<keyword id="KW-0150">Chloroplast</keyword>
<keyword id="KW-0157">Chromophore</keyword>
<keyword id="KW-0472">Membrane</keyword>
<keyword id="KW-0602">Photosynthesis</keyword>
<keyword id="KW-0604">Photosystem II</keyword>
<keyword id="KW-0934">Plastid</keyword>
<keyword id="KW-0793">Thylakoid</keyword>
<keyword id="KW-0812">Transmembrane</keyword>
<keyword id="KW-1133">Transmembrane helix</keyword>
<evidence type="ECO:0000255" key="1">
    <source>
        <dbReference type="HAMAP-Rule" id="MF_01495"/>
    </source>
</evidence>
<name>PSBB_WELMI</name>
<protein>
    <recommendedName>
        <fullName evidence="1">Photosystem II CP47 reaction center protein</fullName>
    </recommendedName>
    <alternativeName>
        <fullName evidence="1">PSII 47 kDa protein</fullName>
    </alternativeName>
    <alternativeName>
        <fullName evidence="1">Protein CP-47</fullName>
    </alternativeName>
</protein>
<feature type="chain" id="PRO_0000359867" description="Photosystem II CP47 reaction center protein">
    <location>
        <begin position="1"/>
        <end position="508"/>
    </location>
</feature>
<feature type="transmembrane region" description="Helical" evidence="1">
    <location>
        <begin position="21"/>
        <end position="36"/>
    </location>
</feature>
<feature type="transmembrane region" description="Helical" evidence="1">
    <location>
        <begin position="101"/>
        <end position="115"/>
    </location>
</feature>
<feature type="transmembrane region" description="Helical" evidence="1">
    <location>
        <begin position="140"/>
        <end position="156"/>
    </location>
</feature>
<feature type="transmembrane region" description="Helical" evidence="1">
    <location>
        <begin position="203"/>
        <end position="218"/>
    </location>
</feature>
<feature type="transmembrane region" description="Helical" evidence="1">
    <location>
        <begin position="237"/>
        <end position="252"/>
    </location>
</feature>
<feature type="transmembrane region" description="Helical" evidence="1">
    <location>
        <begin position="457"/>
        <end position="472"/>
    </location>
</feature>